<accession>Q81G04</accession>
<proteinExistence type="inferred from homology"/>
<gene>
    <name evidence="1" type="primary">hisH</name>
    <name type="ordered locus">BC_1408</name>
</gene>
<sequence>MIAIIDYGMGNIRSVEQALKYIGAEYIVTSDKKEILRSDGVILPGVGAFPKAMDVLEERDLVCVLKEVCDIGKPLLGICLGMQLLFERSEELKDCSGLGLLPGEIRKLKVSYKIPHMGWNELRKEREFPLWNGLVDGSFVYYVHSYYADCPDEIVCGVSDYGMQVPGFVAKGNVFGAQFHPEKSGEIGMQILKNFQGVVEAWKSSQLSI</sequence>
<reference key="1">
    <citation type="journal article" date="2003" name="Nature">
        <title>Genome sequence of Bacillus cereus and comparative analysis with Bacillus anthracis.</title>
        <authorList>
            <person name="Ivanova N."/>
            <person name="Sorokin A."/>
            <person name="Anderson I."/>
            <person name="Galleron N."/>
            <person name="Candelon B."/>
            <person name="Kapatral V."/>
            <person name="Bhattacharyya A."/>
            <person name="Reznik G."/>
            <person name="Mikhailova N."/>
            <person name="Lapidus A."/>
            <person name="Chu L."/>
            <person name="Mazur M."/>
            <person name="Goltsman E."/>
            <person name="Larsen N."/>
            <person name="D'Souza M."/>
            <person name="Walunas T."/>
            <person name="Grechkin Y."/>
            <person name="Pusch G."/>
            <person name="Haselkorn R."/>
            <person name="Fonstein M."/>
            <person name="Ehrlich S.D."/>
            <person name="Overbeek R."/>
            <person name="Kyrpides N.C."/>
        </authorList>
    </citation>
    <scope>NUCLEOTIDE SEQUENCE [LARGE SCALE GENOMIC DNA]</scope>
    <source>
        <strain>ATCC 14579 / DSM 31 / CCUG 7414 / JCM 2152 / NBRC 15305 / NCIMB 9373 / NCTC 2599 / NRRL B-3711</strain>
    </source>
</reference>
<comment type="function">
    <text evidence="1">IGPS catalyzes the conversion of PRFAR and glutamine to IGP, AICAR and glutamate. The HisH subunit catalyzes the hydrolysis of glutamine to glutamate and ammonia as part of the synthesis of IGP and AICAR. The resulting ammonia molecule is channeled to the active site of HisF.</text>
</comment>
<comment type="catalytic activity">
    <reaction evidence="1">
        <text>5-[(5-phospho-1-deoxy-D-ribulos-1-ylimino)methylamino]-1-(5-phospho-beta-D-ribosyl)imidazole-4-carboxamide + L-glutamine = D-erythro-1-(imidazol-4-yl)glycerol 3-phosphate + 5-amino-1-(5-phospho-beta-D-ribosyl)imidazole-4-carboxamide + L-glutamate + H(+)</text>
        <dbReference type="Rhea" id="RHEA:24793"/>
        <dbReference type="ChEBI" id="CHEBI:15378"/>
        <dbReference type="ChEBI" id="CHEBI:29985"/>
        <dbReference type="ChEBI" id="CHEBI:58278"/>
        <dbReference type="ChEBI" id="CHEBI:58359"/>
        <dbReference type="ChEBI" id="CHEBI:58475"/>
        <dbReference type="ChEBI" id="CHEBI:58525"/>
        <dbReference type="EC" id="4.3.2.10"/>
    </reaction>
</comment>
<comment type="catalytic activity">
    <reaction evidence="1">
        <text>L-glutamine + H2O = L-glutamate + NH4(+)</text>
        <dbReference type="Rhea" id="RHEA:15889"/>
        <dbReference type="ChEBI" id="CHEBI:15377"/>
        <dbReference type="ChEBI" id="CHEBI:28938"/>
        <dbReference type="ChEBI" id="CHEBI:29985"/>
        <dbReference type="ChEBI" id="CHEBI:58359"/>
        <dbReference type="EC" id="3.5.1.2"/>
    </reaction>
</comment>
<comment type="pathway">
    <text evidence="1">Amino-acid biosynthesis; L-histidine biosynthesis; L-histidine from 5-phospho-alpha-D-ribose 1-diphosphate: step 5/9.</text>
</comment>
<comment type="subunit">
    <text evidence="1">Heterodimer of HisH and HisF.</text>
</comment>
<comment type="subcellular location">
    <subcellularLocation>
        <location evidence="1">Cytoplasm</location>
    </subcellularLocation>
</comment>
<evidence type="ECO:0000255" key="1">
    <source>
        <dbReference type="HAMAP-Rule" id="MF_00278"/>
    </source>
</evidence>
<feature type="chain" id="PRO_0000152339" description="Imidazole glycerol phosphate synthase subunit HisH">
    <location>
        <begin position="1"/>
        <end position="209"/>
    </location>
</feature>
<feature type="domain" description="Glutamine amidotransferase type-1" evidence="1">
    <location>
        <begin position="1"/>
        <end position="205"/>
    </location>
</feature>
<feature type="active site" description="Nucleophile" evidence="1">
    <location>
        <position position="79"/>
    </location>
</feature>
<feature type="active site" evidence="1">
    <location>
        <position position="180"/>
    </location>
</feature>
<feature type="active site" evidence="1">
    <location>
        <position position="182"/>
    </location>
</feature>
<dbReference type="EC" id="4.3.2.10" evidence="1"/>
<dbReference type="EC" id="3.5.1.2" evidence="1"/>
<dbReference type="EMBL" id="AE016877">
    <property type="protein sequence ID" value="AAP08389.1"/>
    <property type="molecule type" value="Genomic_DNA"/>
</dbReference>
<dbReference type="RefSeq" id="NP_831188.1">
    <property type="nucleotide sequence ID" value="NC_004722.1"/>
</dbReference>
<dbReference type="RefSeq" id="WP_000560360.1">
    <property type="nucleotide sequence ID" value="NZ_CP138336.1"/>
</dbReference>
<dbReference type="SMR" id="Q81G04"/>
<dbReference type="STRING" id="226900.BC_1408"/>
<dbReference type="MEROPS" id="C26.965"/>
<dbReference type="KEGG" id="bce:BC1408"/>
<dbReference type="PATRIC" id="fig|226900.8.peg.1385"/>
<dbReference type="HOGENOM" id="CLU_071837_2_2_9"/>
<dbReference type="OrthoDB" id="9807137at2"/>
<dbReference type="UniPathway" id="UPA00031">
    <property type="reaction ID" value="UER00010"/>
</dbReference>
<dbReference type="Proteomes" id="UP000001417">
    <property type="component" value="Chromosome"/>
</dbReference>
<dbReference type="GO" id="GO:0005737">
    <property type="term" value="C:cytoplasm"/>
    <property type="evidence" value="ECO:0007669"/>
    <property type="project" value="UniProtKB-SubCell"/>
</dbReference>
<dbReference type="GO" id="GO:0004359">
    <property type="term" value="F:glutaminase activity"/>
    <property type="evidence" value="ECO:0007669"/>
    <property type="project" value="UniProtKB-EC"/>
</dbReference>
<dbReference type="GO" id="GO:0000107">
    <property type="term" value="F:imidazoleglycerol-phosphate synthase activity"/>
    <property type="evidence" value="ECO:0000318"/>
    <property type="project" value="GO_Central"/>
</dbReference>
<dbReference type="GO" id="GO:0016829">
    <property type="term" value="F:lyase activity"/>
    <property type="evidence" value="ECO:0007669"/>
    <property type="project" value="UniProtKB-KW"/>
</dbReference>
<dbReference type="GO" id="GO:0000105">
    <property type="term" value="P:L-histidine biosynthetic process"/>
    <property type="evidence" value="ECO:0007669"/>
    <property type="project" value="UniProtKB-UniRule"/>
</dbReference>
<dbReference type="CDD" id="cd01748">
    <property type="entry name" value="GATase1_IGP_Synthase"/>
    <property type="match status" value="1"/>
</dbReference>
<dbReference type="FunFam" id="3.40.50.880:FF:000028">
    <property type="entry name" value="Imidazole glycerol phosphate synthase subunit HisH"/>
    <property type="match status" value="1"/>
</dbReference>
<dbReference type="Gene3D" id="3.40.50.880">
    <property type="match status" value="1"/>
</dbReference>
<dbReference type="HAMAP" id="MF_00278">
    <property type="entry name" value="HisH"/>
    <property type="match status" value="1"/>
</dbReference>
<dbReference type="InterPro" id="IPR029062">
    <property type="entry name" value="Class_I_gatase-like"/>
</dbReference>
<dbReference type="InterPro" id="IPR017926">
    <property type="entry name" value="GATASE"/>
</dbReference>
<dbReference type="InterPro" id="IPR010139">
    <property type="entry name" value="Imidazole-glycPsynth_HisH"/>
</dbReference>
<dbReference type="NCBIfam" id="TIGR01855">
    <property type="entry name" value="IMP_synth_hisH"/>
    <property type="match status" value="1"/>
</dbReference>
<dbReference type="PANTHER" id="PTHR42701">
    <property type="entry name" value="IMIDAZOLE GLYCEROL PHOSPHATE SYNTHASE SUBUNIT HISH"/>
    <property type="match status" value="1"/>
</dbReference>
<dbReference type="PANTHER" id="PTHR42701:SF1">
    <property type="entry name" value="IMIDAZOLE GLYCEROL PHOSPHATE SYNTHASE SUBUNIT HISH"/>
    <property type="match status" value="1"/>
</dbReference>
<dbReference type="Pfam" id="PF00117">
    <property type="entry name" value="GATase"/>
    <property type="match status" value="1"/>
</dbReference>
<dbReference type="PIRSF" id="PIRSF000495">
    <property type="entry name" value="Amidotransf_hisH"/>
    <property type="match status" value="1"/>
</dbReference>
<dbReference type="SUPFAM" id="SSF52317">
    <property type="entry name" value="Class I glutamine amidotransferase-like"/>
    <property type="match status" value="1"/>
</dbReference>
<dbReference type="PROSITE" id="PS51273">
    <property type="entry name" value="GATASE_TYPE_1"/>
    <property type="match status" value="1"/>
</dbReference>
<keyword id="KW-0028">Amino-acid biosynthesis</keyword>
<keyword id="KW-0963">Cytoplasm</keyword>
<keyword id="KW-0315">Glutamine amidotransferase</keyword>
<keyword id="KW-0368">Histidine biosynthesis</keyword>
<keyword id="KW-0378">Hydrolase</keyword>
<keyword id="KW-0456">Lyase</keyword>
<keyword id="KW-1185">Reference proteome</keyword>
<name>HIS5_BACCR</name>
<organism>
    <name type="scientific">Bacillus cereus (strain ATCC 14579 / DSM 31 / CCUG 7414 / JCM 2152 / NBRC 15305 / NCIMB 9373 / NCTC 2599 / NRRL B-3711)</name>
    <dbReference type="NCBI Taxonomy" id="226900"/>
    <lineage>
        <taxon>Bacteria</taxon>
        <taxon>Bacillati</taxon>
        <taxon>Bacillota</taxon>
        <taxon>Bacilli</taxon>
        <taxon>Bacillales</taxon>
        <taxon>Bacillaceae</taxon>
        <taxon>Bacillus</taxon>
        <taxon>Bacillus cereus group</taxon>
    </lineage>
</organism>
<protein>
    <recommendedName>
        <fullName evidence="1">Imidazole glycerol phosphate synthase subunit HisH</fullName>
        <ecNumber evidence="1">4.3.2.10</ecNumber>
    </recommendedName>
    <alternativeName>
        <fullName evidence="1">IGP synthase glutaminase subunit</fullName>
        <ecNumber evidence="1">3.5.1.2</ecNumber>
    </alternativeName>
    <alternativeName>
        <fullName evidence="1">IGP synthase subunit HisH</fullName>
    </alternativeName>
    <alternativeName>
        <fullName evidence="1">ImGP synthase subunit HisH</fullName>
        <shortName evidence="1">IGPS subunit HisH</shortName>
    </alternativeName>
</protein>